<dbReference type="EMBL" id="CP000075">
    <property type="protein sequence ID" value="AAY39233.1"/>
    <property type="molecule type" value="Genomic_DNA"/>
</dbReference>
<dbReference type="RefSeq" id="WP_003400147.1">
    <property type="nucleotide sequence ID" value="NC_007005.1"/>
</dbReference>
<dbReference type="RefSeq" id="YP_237271.1">
    <property type="nucleotide sequence ID" value="NC_007005.1"/>
</dbReference>
<dbReference type="SMR" id="Q4ZNN9"/>
<dbReference type="STRING" id="205918.Psyr_4203"/>
<dbReference type="KEGG" id="psb:Psyr_4203"/>
<dbReference type="PATRIC" id="fig|205918.7.peg.4330"/>
<dbReference type="eggNOG" id="COG0691">
    <property type="taxonomic scope" value="Bacteria"/>
</dbReference>
<dbReference type="HOGENOM" id="CLU_108953_3_0_6"/>
<dbReference type="OrthoDB" id="9805462at2"/>
<dbReference type="Proteomes" id="UP000000426">
    <property type="component" value="Chromosome"/>
</dbReference>
<dbReference type="GO" id="GO:0005829">
    <property type="term" value="C:cytosol"/>
    <property type="evidence" value="ECO:0007669"/>
    <property type="project" value="TreeGrafter"/>
</dbReference>
<dbReference type="GO" id="GO:0003723">
    <property type="term" value="F:RNA binding"/>
    <property type="evidence" value="ECO:0007669"/>
    <property type="project" value="UniProtKB-UniRule"/>
</dbReference>
<dbReference type="GO" id="GO:0070929">
    <property type="term" value="P:trans-translation"/>
    <property type="evidence" value="ECO:0007669"/>
    <property type="project" value="UniProtKB-UniRule"/>
</dbReference>
<dbReference type="CDD" id="cd09294">
    <property type="entry name" value="SmpB"/>
    <property type="match status" value="1"/>
</dbReference>
<dbReference type="Gene3D" id="2.40.280.10">
    <property type="match status" value="1"/>
</dbReference>
<dbReference type="HAMAP" id="MF_00023">
    <property type="entry name" value="SmpB"/>
    <property type="match status" value="1"/>
</dbReference>
<dbReference type="InterPro" id="IPR023620">
    <property type="entry name" value="SmpB"/>
</dbReference>
<dbReference type="InterPro" id="IPR000037">
    <property type="entry name" value="SsrA-bd_prot"/>
</dbReference>
<dbReference type="InterPro" id="IPR020081">
    <property type="entry name" value="SsrA-bd_prot_CS"/>
</dbReference>
<dbReference type="NCBIfam" id="NF003843">
    <property type="entry name" value="PRK05422.1"/>
    <property type="match status" value="1"/>
</dbReference>
<dbReference type="NCBIfam" id="TIGR00086">
    <property type="entry name" value="smpB"/>
    <property type="match status" value="1"/>
</dbReference>
<dbReference type="PANTHER" id="PTHR30308:SF2">
    <property type="entry name" value="SSRA-BINDING PROTEIN"/>
    <property type="match status" value="1"/>
</dbReference>
<dbReference type="PANTHER" id="PTHR30308">
    <property type="entry name" value="TMRNA-BINDING COMPONENT OF TRANS-TRANSLATION TAGGING COMPLEX"/>
    <property type="match status" value="1"/>
</dbReference>
<dbReference type="Pfam" id="PF01668">
    <property type="entry name" value="SmpB"/>
    <property type="match status" value="1"/>
</dbReference>
<dbReference type="SUPFAM" id="SSF74982">
    <property type="entry name" value="Small protein B (SmpB)"/>
    <property type="match status" value="1"/>
</dbReference>
<dbReference type="PROSITE" id="PS01317">
    <property type="entry name" value="SSRP"/>
    <property type="match status" value="1"/>
</dbReference>
<gene>
    <name evidence="1" type="primary">smpB</name>
    <name type="ordered locus">Psyr_4203</name>
</gene>
<name>SSRP_PSEU2</name>
<keyword id="KW-0963">Cytoplasm</keyword>
<keyword id="KW-0694">RNA-binding</keyword>
<organism>
    <name type="scientific">Pseudomonas syringae pv. syringae (strain B728a)</name>
    <dbReference type="NCBI Taxonomy" id="205918"/>
    <lineage>
        <taxon>Bacteria</taxon>
        <taxon>Pseudomonadati</taxon>
        <taxon>Pseudomonadota</taxon>
        <taxon>Gammaproteobacteria</taxon>
        <taxon>Pseudomonadales</taxon>
        <taxon>Pseudomonadaceae</taxon>
        <taxon>Pseudomonas</taxon>
        <taxon>Pseudomonas syringae</taxon>
    </lineage>
</organism>
<evidence type="ECO:0000255" key="1">
    <source>
        <dbReference type="HAMAP-Rule" id="MF_00023"/>
    </source>
</evidence>
<evidence type="ECO:0000256" key="2">
    <source>
        <dbReference type="SAM" id="MobiDB-lite"/>
    </source>
</evidence>
<comment type="function">
    <text evidence="1">Required for rescue of stalled ribosomes mediated by trans-translation. Binds to transfer-messenger RNA (tmRNA), required for stable association of tmRNA with ribosomes. tmRNA and SmpB together mimic tRNA shape, replacing the anticodon stem-loop with SmpB. tmRNA is encoded by the ssrA gene; the 2 termini fold to resemble tRNA(Ala) and it encodes a 'tag peptide', a short internal open reading frame. During trans-translation Ala-aminoacylated tmRNA acts like a tRNA, entering the A-site of stalled ribosomes, displacing the stalled mRNA. The ribosome then switches to translate the ORF on the tmRNA; the nascent peptide is terminated with the 'tag peptide' encoded by the tmRNA and targeted for degradation. The ribosome is freed to recommence translation, which seems to be the essential function of trans-translation.</text>
</comment>
<comment type="subcellular location">
    <subcellularLocation>
        <location evidence="1">Cytoplasm</location>
    </subcellularLocation>
    <text evidence="1">The tmRNA-SmpB complex associates with stalled 70S ribosomes.</text>
</comment>
<comment type="similarity">
    <text evidence="1">Belongs to the SmpB family.</text>
</comment>
<protein>
    <recommendedName>
        <fullName evidence="1">SsrA-binding protein</fullName>
    </recommendedName>
    <alternativeName>
        <fullName evidence="1">Small protein B</fullName>
    </alternativeName>
</protein>
<proteinExistence type="inferred from homology"/>
<feature type="chain" id="PRO_1000002116" description="SsrA-binding protein">
    <location>
        <begin position="1"/>
        <end position="160"/>
    </location>
</feature>
<feature type="region of interest" description="Disordered" evidence="2">
    <location>
        <begin position="131"/>
        <end position="160"/>
    </location>
</feature>
<accession>Q4ZNN9</accession>
<reference key="1">
    <citation type="journal article" date="2005" name="Proc. Natl. Acad. Sci. U.S.A.">
        <title>Comparison of the complete genome sequences of Pseudomonas syringae pv. syringae B728a and pv. tomato DC3000.</title>
        <authorList>
            <person name="Feil H."/>
            <person name="Feil W.S."/>
            <person name="Chain P."/>
            <person name="Larimer F."/>
            <person name="Dibartolo G."/>
            <person name="Copeland A."/>
            <person name="Lykidis A."/>
            <person name="Trong S."/>
            <person name="Nolan M."/>
            <person name="Goltsman E."/>
            <person name="Thiel J."/>
            <person name="Malfatti S."/>
            <person name="Loper J.E."/>
            <person name="Lapidus A."/>
            <person name="Detter J.C."/>
            <person name="Land M."/>
            <person name="Richardson P.M."/>
            <person name="Kyrpides N.C."/>
            <person name="Ivanova N."/>
            <person name="Lindow S.E."/>
        </authorList>
    </citation>
    <scope>NUCLEOTIDE SEQUENCE [LARGE SCALE GENOMIC DNA]</scope>
    <source>
        <strain>B728a</strain>
    </source>
</reference>
<sequence>MAKLKKHPTGTIAQNKKARHDYFIEHKFEAGLVLSGWEVKSLRATKVQLVDSYVLLKDGEAWLMGCHITPLKTASTHVIADPTRTRKLLLNKRELEKLTSSVQQKGYACVALSVYWKEHLVKCEIALGKGKKEYDKRHTERERDSDRELQRAVRSKGKDD</sequence>